<protein>
    <recommendedName>
        <fullName evidence="1">3-deoxy-D-manno-octulosonic acid kinase</fullName>
        <shortName evidence="1">Kdo kinase</shortName>
        <ecNumber evidence="1">2.7.1.166</ecNumber>
    </recommendedName>
</protein>
<evidence type="ECO:0000255" key="1">
    <source>
        <dbReference type="HAMAP-Rule" id="MF_00521"/>
    </source>
</evidence>
<organism>
    <name type="scientific">Stenotrophomonas maltophilia (strain K279a)</name>
    <dbReference type="NCBI Taxonomy" id="522373"/>
    <lineage>
        <taxon>Bacteria</taxon>
        <taxon>Pseudomonadati</taxon>
        <taxon>Pseudomonadota</taxon>
        <taxon>Gammaproteobacteria</taxon>
        <taxon>Lysobacterales</taxon>
        <taxon>Lysobacteraceae</taxon>
        <taxon>Stenotrophomonas</taxon>
        <taxon>Stenotrophomonas maltophilia group</taxon>
    </lineage>
</organism>
<gene>
    <name evidence="1" type="primary">kdkA</name>
    <name type="ordered locus">Smlt1004</name>
</gene>
<sequence>MVAFDANEALTPCREGRGIGAILFDRERLRQAEVGLFSPQHWGSKARPVGEGGRGSAWFIDAPFGASVLRHYLRGGLAAKISHDQYLWRGSDRTRSFAEFRLMRALREKKLPVPRPIAAYYMREGLRYRAAILMERIEGVRSLADRALVAGRGAPWEETGRLIARFHRAGLDHADLNAHNILFDGNGHGWLIDFDRGVIRIPATAWRERNLKRLLRSLIKLRGERSVEDVQKDYARLRRAYDMAWNRGT</sequence>
<name>KDKA_STRMK</name>
<dbReference type="EC" id="2.7.1.166" evidence="1"/>
<dbReference type="EMBL" id="AM743169">
    <property type="protein sequence ID" value="CAQ44567.1"/>
    <property type="molecule type" value="Genomic_DNA"/>
</dbReference>
<dbReference type="RefSeq" id="WP_012479275.1">
    <property type="nucleotide sequence ID" value="NC_010943.1"/>
</dbReference>
<dbReference type="SMR" id="B2FR65"/>
<dbReference type="EnsemblBacteria" id="CAQ44567">
    <property type="protein sequence ID" value="CAQ44567"/>
    <property type="gene ID" value="Smlt1004"/>
</dbReference>
<dbReference type="KEGG" id="sml:Smlt1004"/>
<dbReference type="PATRIC" id="fig|522373.3.peg.971"/>
<dbReference type="eggNOG" id="COG3642">
    <property type="taxonomic scope" value="Bacteria"/>
</dbReference>
<dbReference type="HOGENOM" id="CLU_094226_0_0_6"/>
<dbReference type="UniPathway" id="UPA00958"/>
<dbReference type="Proteomes" id="UP000008840">
    <property type="component" value="Chromosome"/>
</dbReference>
<dbReference type="GO" id="GO:0005829">
    <property type="term" value="C:cytosol"/>
    <property type="evidence" value="ECO:0007669"/>
    <property type="project" value="TreeGrafter"/>
</dbReference>
<dbReference type="GO" id="GO:0005886">
    <property type="term" value="C:plasma membrane"/>
    <property type="evidence" value="ECO:0007669"/>
    <property type="project" value="UniProtKB-SubCell"/>
</dbReference>
<dbReference type="GO" id="GO:0030688">
    <property type="term" value="C:preribosome, small subunit precursor"/>
    <property type="evidence" value="ECO:0007669"/>
    <property type="project" value="TreeGrafter"/>
</dbReference>
<dbReference type="GO" id="GO:0005524">
    <property type="term" value="F:ATP binding"/>
    <property type="evidence" value="ECO:0007669"/>
    <property type="project" value="UniProtKB-UniRule"/>
</dbReference>
<dbReference type="GO" id="GO:0004672">
    <property type="term" value="F:protein kinase activity"/>
    <property type="evidence" value="ECO:0007669"/>
    <property type="project" value="TreeGrafter"/>
</dbReference>
<dbReference type="GO" id="GO:0009244">
    <property type="term" value="P:lipopolysaccharide core region biosynthetic process"/>
    <property type="evidence" value="ECO:0007669"/>
    <property type="project" value="UniProtKB-UniRule"/>
</dbReference>
<dbReference type="GO" id="GO:0030490">
    <property type="term" value="P:maturation of SSU-rRNA"/>
    <property type="evidence" value="ECO:0007669"/>
    <property type="project" value="TreeGrafter"/>
</dbReference>
<dbReference type="Gene3D" id="1.10.510.10">
    <property type="entry name" value="Transferase(Phosphotransferase) domain 1"/>
    <property type="match status" value="1"/>
</dbReference>
<dbReference type="HAMAP" id="MF_00521">
    <property type="entry name" value="KDO_kinase"/>
    <property type="match status" value="1"/>
</dbReference>
<dbReference type="InterPro" id="IPR022826">
    <property type="entry name" value="KDO_kinase"/>
</dbReference>
<dbReference type="InterPro" id="IPR011009">
    <property type="entry name" value="Kinase-like_dom_sf"/>
</dbReference>
<dbReference type="NCBIfam" id="NF002475">
    <property type="entry name" value="PRK01723.1"/>
    <property type="match status" value="1"/>
</dbReference>
<dbReference type="PANTHER" id="PTHR45852">
    <property type="entry name" value="SER/THR-PROTEIN KINASE RIO2"/>
    <property type="match status" value="1"/>
</dbReference>
<dbReference type="PANTHER" id="PTHR45852:SF1">
    <property type="entry name" value="SERINE_THREONINE-PROTEIN KINASE RIO2"/>
    <property type="match status" value="1"/>
</dbReference>
<dbReference type="Pfam" id="PF06293">
    <property type="entry name" value="Kdo"/>
    <property type="match status" value="1"/>
</dbReference>
<dbReference type="SUPFAM" id="SSF56112">
    <property type="entry name" value="Protein kinase-like (PK-like)"/>
    <property type="match status" value="1"/>
</dbReference>
<reference key="1">
    <citation type="journal article" date="2008" name="Genome Biol.">
        <title>The complete genome, comparative and functional analysis of Stenotrophomonas maltophilia reveals an organism heavily shielded by drug resistance determinants.</title>
        <authorList>
            <person name="Crossman L.C."/>
            <person name="Gould V.C."/>
            <person name="Dow J.M."/>
            <person name="Vernikos G.S."/>
            <person name="Okazaki A."/>
            <person name="Sebaihia M."/>
            <person name="Saunders D."/>
            <person name="Arrowsmith C."/>
            <person name="Carver T."/>
            <person name="Peters N."/>
            <person name="Adlem E."/>
            <person name="Kerhornou A."/>
            <person name="Lord A."/>
            <person name="Murphy L."/>
            <person name="Seeger K."/>
            <person name="Squares R."/>
            <person name="Rutter S."/>
            <person name="Quail M.A."/>
            <person name="Rajandream M.A."/>
            <person name="Harris D."/>
            <person name="Churcher C."/>
            <person name="Bentley S.D."/>
            <person name="Parkhill J."/>
            <person name="Thomson N.R."/>
            <person name="Avison M.B."/>
        </authorList>
    </citation>
    <scope>NUCLEOTIDE SEQUENCE [LARGE SCALE GENOMIC DNA]</scope>
    <source>
        <strain>K279a</strain>
    </source>
</reference>
<accession>B2FR65</accession>
<keyword id="KW-0067">ATP-binding</keyword>
<keyword id="KW-0997">Cell inner membrane</keyword>
<keyword id="KW-1003">Cell membrane</keyword>
<keyword id="KW-0418">Kinase</keyword>
<keyword id="KW-0448">Lipopolysaccharide biosynthesis</keyword>
<keyword id="KW-0472">Membrane</keyword>
<keyword id="KW-0547">Nucleotide-binding</keyword>
<keyword id="KW-1185">Reference proteome</keyword>
<keyword id="KW-0808">Transferase</keyword>
<feature type="chain" id="PRO_1000200652" description="3-deoxy-D-manno-octulosonic acid kinase">
    <location>
        <begin position="1"/>
        <end position="249"/>
    </location>
</feature>
<feature type="active site" evidence="1">
    <location>
        <position position="175"/>
    </location>
</feature>
<proteinExistence type="inferred from homology"/>
<comment type="function">
    <text evidence="1">Catalyzes the ATP-dependent phosphorylation of the 3-deoxy-D-manno-octulosonic acid (Kdo) residue in Kdo-lipid IV(A) at the 4-OH position.</text>
</comment>
<comment type="catalytic activity">
    <reaction evidence="1">
        <text>an alpha-Kdo-(2-&gt;6)-lipid IVA + ATP = a 4-O-phospho-alpha-Kdo-(2-&gt;6)-lipid IVA + ADP + H(+)</text>
        <dbReference type="Rhea" id="RHEA:74271"/>
        <dbReference type="ChEBI" id="CHEBI:15378"/>
        <dbReference type="ChEBI" id="CHEBI:30616"/>
        <dbReference type="ChEBI" id="CHEBI:176428"/>
        <dbReference type="ChEBI" id="CHEBI:193140"/>
        <dbReference type="ChEBI" id="CHEBI:456216"/>
        <dbReference type="EC" id="2.7.1.166"/>
    </reaction>
</comment>
<comment type="pathway">
    <text evidence="1">Bacterial outer membrane biogenesis; LPS core biosynthesis.</text>
</comment>
<comment type="subcellular location">
    <subcellularLocation>
        <location evidence="1">Cell inner membrane</location>
        <topology evidence="1">Peripheral membrane protein</topology>
        <orientation evidence="1">Cytoplasmic side</orientation>
    </subcellularLocation>
</comment>
<comment type="similarity">
    <text evidence="1">Belongs to the protein kinase superfamily. KdkA/RfaP family.</text>
</comment>